<reference key="1">
    <citation type="journal article" date="2009" name="Appl. Environ. Microbiol.">
        <title>Complete genome sequence of the chemolithoautotrophic marine magnetotactic coccus strain MC-1.</title>
        <authorList>
            <person name="Schubbe S."/>
            <person name="Williams T.J."/>
            <person name="Xie G."/>
            <person name="Kiss H.E."/>
            <person name="Brettin T.S."/>
            <person name="Martinez D."/>
            <person name="Ross C.A."/>
            <person name="Schuler D."/>
            <person name="Cox B.L."/>
            <person name="Nealson K.H."/>
            <person name="Bazylinski D.A."/>
        </authorList>
    </citation>
    <scope>NUCLEOTIDE SEQUENCE [LARGE SCALE GENOMIC DNA]</scope>
    <source>
        <strain>ATCC BAA-1437 / JCM 17883 / MC-1</strain>
    </source>
</reference>
<name>RSMH_MAGMM</name>
<comment type="function">
    <text evidence="1">Specifically methylates the N4 position of cytidine in position 1402 (C1402) of 16S rRNA.</text>
</comment>
<comment type="catalytic activity">
    <reaction evidence="1">
        <text>cytidine(1402) in 16S rRNA + S-adenosyl-L-methionine = N(4)-methylcytidine(1402) in 16S rRNA + S-adenosyl-L-homocysteine + H(+)</text>
        <dbReference type="Rhea" id="RHEA:42928"/>
        <dbReference type="Rhea" id="RHEA-COMP:10286"/>
        <dbReference type="Rhea" id="RHEA-COMP:10287"/>
        <dbReference type="ChEBI" id="CHEBI:15378"/>
        <dbReference type="ChEBI" id="CHEBI:57856"/>
        <dbReference type="ChEBI" id="CHEBI:59789"/>
        <dbReference type="ChEBI" id="CHEBI:74506"/>
        <dbReference type="ChEBI" id="CHEBI:82748"/>
        <dbReference type="EC" id="2.1.1.199"/>
    </reaction>
</comment>
<comment type="subcellular location">
    <subcellularLocation>
        <location evidence="1">Cytoplasm</location>
    </subcellularLocation>
</comment>
<comment type="similarity">
    <text evidence="1">Belongs to the methyltransferase superfamily. RsmH family.</text>
</comment>
<gene>
    <name evidence="1" type="primary">rsmH</name>
    <name type="synonym">mraW</name>
    <name type="ordered locus">Mmc1_0761</name>
</gene>
<protein>
    <recommendedName>
        <fullName evidence="1">Ribosomal RNA small subunit methyltransferase H</fullName>
        <ecNumber evidence="1">2.1.1.199</ecNumber>
    </recommendedName>
    <alternativeName>
        <fullName evidence="1">16S rRNA m(4)C1402 methyltransferase</fullName>
    </alternativeName>
    <alternativeName>
        <fullName evidence="1">rRNA (cytosine-N(4)-)-methyltransferase RsmH</fullName>
    </alternativeName>
</protein>
<dbReference type="EC" id="2.1.1.199" evidence="1"/>
<dbReference type="EMBL" id="CP000471">
    <property type="protein sequence ID" value="ABK43282.1"/>
    <property type="molecule type" value="Genomic_DNA"/>
</dbReference>
<dbReference type="RefSeq" id="WP_011712442.1">
    <property type="nucleotide sequence ID" value="NC_008576.1"/>
</dbReference>
<dbReference type="SMR" id="A0L5N9"/>
<dbReference type="STRING" id="156889.Mmc1_0761"/>
<dbReference type="KEGG" id="mgm:Mmc1_0761"/>
<dbReference type="eggNOG" id="COG0275">
    <property type="taxonomic scope" value="Bacteria"/>
</dbReference>
<dbReference type="HOGENOM" id="CLU_038422_1_1_5"/>
<dbReference type="OrthoDB" id="9806637at2"/>
<dbReference type="Proteomes" id="UP000002586">
    <property type="component" value="Chromosome"/>
</dbReference>
<dbReference type="GO" id="GO:0005737">
    <property type="term" value="C:cytoplasm"/>
    <property type="evidence" value="ECO:0007669"/>
    <property type="project" value="UniProtKB-SubCell"/>
</dbReference>
<dbReference type="GO" id="GO:0071424">
    <property type="term" value="F:rRNA (cytosine-N4-)-methyltransferase activity"/>
    <property type="evidence" value="ECO:0007669"/>
    <property type="project" value="UniProtKB-UniRule"/>
</dbReference>
<dbReference type="GO" id="GO:0070475">
    <property type="term" value="P:rRNA base methylation"/>
    <property type="evidence" value="ECO:0007669"/>
    <property type="project" value="UniProtKB-UniRule"/>
</dbReference>
<dbReference type="Gene3D" id="1.10.150.170">
    <property type="entry name" value="Putative methyltransferase TM0872, insert domain"/>
    <property type="match status" value="1"/>
</dbReference>
<dbReference type="Gene3D" id="3.40.50.150">
    <property type="entry name" value="Vaccinia Virus protein VP39"/>
    <property type="match status" value="1"/>
</dbReference>
<dbReference type="HAMAP" id="MF_01007">
    <property type="entry name" value="16SrRNA_methyltr_H"/>
    <property type="match status" value="1"/>
</dbReference>
<dbReference type="InterPro" id="IPR002903">
    <property type="entry name" value="RsmH"/>
</dbReference>
<dbReference type="InterPro" id="IPR023397">
    <property type="entry name" value="SAM-dep_MeTrfase_MraW_recog"/>
</dbReference>
<dbReference type="InterPro" id="IPR029063">
    <property type="entry name" value="SAM-dependent_MTases_sf"/>
</dbReference>
<dbReference type="NCBIfam" id="TIGR00006">
    <property type="entry name" value="16S rRNA (cytosine(1402)-N(4))-methyltransferase RsmH"/>
    <property type="match status" value="1"/>
</dbReference>
<dbReference type="PANTHER" id="PTHR11265:SF0">
    <property type="entry name" value="12S RRNA N4-METHYLCYTIDINE METHYLTRANSFERASE"/>
    <property type="match status" value="1"/>
</dbReference>
<dbReference type="PANTHER" id="PTHR11265">
    <property type="entry name" value="S-ADENOSYL-METHYLTRANSFERASE MRAW"/>
    <property type="match status" value="1"/>
</dbReference>
<dbReference type="Pfam" id="PF01795">
    <property type="entry name" value="Methyltransf_5"/>
    <property type="match status" value="1"/>
</dbReference>
<dbReference type="PIRSF" id="PIRSF004486">
    <property type="entry name" value="MraW"/>
    <property type="match status" value="1"/>
</dbReference>
<dbReference type="SUPFAM" id="SSF81799">
    <property type="entry name" value="Putative methyltransferase TM0872, insert domain"/>
    <property type="match status" value="1"/>
</dbReference>
<dbReference type="SUPFAM" id="SSF53335">
    <property type="entry name" value="S-adenosyl-L-methionine-dependent methyltransferases"/>
    <property type="match status" value="1"/>
</dbReference>
<feature type="chain" id="PRO_0000386966" description="Ribosomal RNA small subunit methyltransferase H">
    <location>
        <begin position="1"/>
        <end position="313"/>
    </location>
</feature>
<feature type="region of interest" description="Disordered" evidence="2">
    <location>
        <begin position="282"/>
        <end position="313"/>
    </location>
</feature>
<feature type="binding site" evidence="1">
    <location>
        <begin position="33"/>
        <end position="35"/>
    </location>
    <ligand>
        <name>S-adenosyl-L-methionine</name>
        <dbReference type="ChEBI" id="CHEBI:59789"/>
    </ligand>
</feature>
<feature type="binding site" evidence="1">
    <location>
        <position position="53"/>
    </location>
    <ligand>
        <name>S-adenosyl-L-methionine</name>
        <dbReference type="ChEBI" id="CHEBI:59789"/>
    </ligand>
</feature>
<feature type="binding site" evidence="1">
    <location>
        <position position="80"/>
    </location>
    <ligand>
        <name>S-adenosyl-L-methionine</name>
        <dbReference type="ChEBI" id="CHEBI:59789"/>
    </ligand>
</feature>
<feature type="binding site" evidence="1">
    <location>
        <position position="101"/>
    </location>
    <ligand>
        <name>S-adenosyl-L-methionine</name>
        <dbReference type="ChEBI" id="CHEBI:59789"/>
    </ligand>
</feature>
<feature type="binding site" evidence="1">
    <location>
        <position position="108"/>
    </location>
    <ligand>
        <name>S-adenosyl-L-methionine</name>
        <dbReference type="ChEBI" id="CHEBI:59789"/>
    </ligand>
</feature>
<sequence>MSFQHTTVLLQETVAALAPQRGGCYLDGTFGGGGHSRLLLEQCAPTGRVIGLDRDADAIANGQALVAQMAGRLTLVKAPFAQVAEVLQQLEIAALDGAMLDLGVSSHQLDTAERGFSFIRSGPLDMRMDGDSTTPTAAALLNTLDADALADIFFHYGEERHARRIARMVVKVRQQHPFTTTTDLAERIAHMTPGYSRIHPATRVFQGLRIAVNEELQQLEQALSVLIGLLKPGGHLAVISFHSLEDRIVKRLFRDAAKPPEDPVLRGLPIAQAQRPKATLKLVHNKPLTPSEAEIEQNPRARSAKLRVAQKLA</sequence>
<organism>
    <name type="scientific">Magnetococcus marinus (strain ATCC BAA-1437 / JCM 17883 / MC-1)</name>
    <dbReference type="NCBI Taxonomy" id="156889"/>
    <lineage>
        <taxon>Bacteria</taxon>
        <taxon>Pseudomonadati</taxon>
        <taxon>Pseudomonadota</taxon>
        <taxon>Alphaproteobacteria</taxon>
        <taxon>Magnetococcales</taxon>
        <taxon>Magnetococcaceae</taxon>
        <taxon>Magnetococcus</taxon>
    </lineage>
</organism>
<accession>A0L5N9</accession>
<evidence type="ECO:0000255" key="1">
    <source>
        <dbReference type="HAMAP-Rule" id="MF_01007"/>
    </source>
</evidence>
<evidence type="ECO:0000256" key="2">
    <source>
        <dbReference type="SAM" id="MobiDB-lite"/>
    </source>
</evidence>
<keyword id="KW-0963">Cytoplasm</keyword>
<keyword id="KW-0489">Methyltransferase</keyword>
<keyword id="KW-1185">Reference proteome</keyword>
<keyword id="KW-0698">rRNA processing</keyword>
<keyword id="KW-0949">S-adenosyl-L-methionine</keyword>
<keyword id="KW-0808">Transferase</keyword>
<proteinExistence type="inferred from homology"/>